<keyword id="KW-0687">Ribonucleoprotein</keyword>
<keyword id="KW-0689">Ribosomal protein</keyword>
<keyword id="KW-0694">RNA-binding</keyword>
<keyword id="KW-0699">rRNA-binding</keyword>
<accession>A5CUA0</accession>
<dbReference type="EMBL" id="AM711867">
    <property type="protein sequence ID" value="CAN02687.1"/>
    <property type="molecule type" value="Genomic_DNA"/>
</dbReference>
<dbReference type="RefSeq" id="WP_012039293.1">
    <property type="nucleotide sequence ID" value="NC_009480.1"/>
</dbReference>
<dbReference type="SMR" id="A5CUA0"/>
<dbReference type="GeneID" id="92984316"/>
<dbReference type="KEGG" id="cmi:CMM_2604"/>
<dbReference type="eggNOG" id="COG0096">
    <property type="taxonomic scope" value="Bacteria"/>
</dbReference>
<dbReference type="HOGENOM" id="CLU_098428_0_1_11"/>
<dbReference type="OrthoDB" id="9802617at2"/>
<dbReference type="Proteomes" id="UP000001564">
    <property type="component" value="Chromosome"/>
</dbReference>
<dbReference type="GO" id="GO:1990904">
    <property type="term" value="C:ribonucleoprotein complex"/>
    <property type="evidence" value="ECO:0007669"/>
    <property type="project" value="UniProtKB-KW"/>
</dbReference>
<dbReference type="GO" id="GO:0005840">
    <property type="term" value="C:ribosome"/>
    <property type="evidence" value="ECO:0007669"/>
    <property type="project" value="UniProtKB-KW"/>
</dbReference>
<dbReference type="GO" id="GO:0019843">
    <property type="term" value="F:rRNA binding"/>
    <property type="evidence" value="ECO:0007669"/>
    <property type="project" value="UniProtKB-UniRule"/>
</dbReference>
<dbReference type="GO" id="GO:0003735">
    <property type="term" value="F:structural constituent of ribosome"/>
    <property type="evidence" value="ECO:0007669"/>
    <property type="project" value="InterPro"/>
</dbReference>
<dbReference type="GO" id="GO:0006412">
    <property type="term" value="P:translation"/>
    <property type="evidence" value="ECO:0007669"/>
    <property type="project" value="UniProtKB-UniRule"/>
</dbReference>
<dbReference type="FunFam" id="3.30.1370.30:FF:000002">
    <property type="entry name" value="30S ribosomal protein S8"/>
    <property type="match status" value="1"/>
</dbReference>
<dbReference type="FunFam" id="3.30.1490.10:FF:000001">
    <property type="entry name" value="30S ribosomal protein S8"/>
    <property type="match status" value="1"/>
</dbReference>
<dbReference type="Gene3D" id="3.30.1370.30">
    <property type="match status" value="1"/>
</dbReference>
<dbReference type="Gene3D" id="3.30.1490.10">
    <property type="match status" value="1"/>
</dbReference>
<dbReference type="HAMAP" id="MF_01302_B">
    <property type="entry name" value="Ribosomal_uS8_B"/>
    <property type="match status" value="1"/>
</dbReference>
<dbReference type="InterPro" id="IPR000630">
    <property type="entry name" value="Ribosomal_uS8"/>
</dbReference>
<dbReference type="InterPro" id="IPR047863">
    <property type="entry name" value="Ribosomal_uS8_CS"/>
</dbReference>
<dbReference type="InterPro" id="IPR035987">
    <property type="entry name" value="Ribosomal_uS8_sf"/>
</dbReference>
<dbReference type="NCBIfam" id="NF001109">
    <property type="entry name" value="PRK00136.1"/>
    <property type="match status" value="1"/>
</dbReference>
<dbReference type="PANTHER" id="PTHR11758">
    <property type="entry name" value="40S RIBOSOMAL PROTEIN S15A"/>
    <property type="match status" value="1"/>
</dbReference>
<dbReference type="Pfam" id="PF00410">
    <property type="entry name" value="Ribosomal_S8"/>
    <property type="match status" value="1"/>
</dbReference>
<dbReference type="SUPFAM" id="SSF56047">
    <property type="entry name" value="Ribosomal protein S8"/>
    <property type="match status" value="1"/>
</dbReference>
<dbReference type="PROSITE" id="PS00053">
    <property type="entry name" value="RIBOSOMAL_S8"/>
    <property type="match status" value="1"/>
</dbReference>
<feature type="chain" id="PRO_1000051777" description="Small ribosomal subunit protein uS8">
    <location>
        <begin position="1"/>
        <end position="132"/>
    </location>
</feature>
<comment type="function">
    <text evidence="1">One of the primary rRNA binding proteins, it binds directly to 16S rRNA central domain where it helps coordinate assembly of the platform of the 30S subunit.</text>
</comment>
<comment type="subunit">
    <text evidence="1">Part of the 30S ribosomal subunit. Contacts proteins S5 and S12.</text>
</comment>
<comment type="similarity">
    <text evidence="1">Belongs to the universal ribosomal protein uS8 family.</text>
</comment>
<name>RS8_CLAM3</name>
<sequence>MTMTDPVADMLTRLRNANSAHHDTVSMPHSKLKSHIADILKSEGFIAGWDVADARVGQTLTLSLKFGPDRERSIRGIKRVSKPGLRVYAKSAEIPQVLGGLGVAILSTSSGLLTDRQAAKKGVGGEVLAYVW</sequence>
<proteinExistence type="inferred from homology"/>
<organism>
    <name type="scientific">Clavibacter michiganensis subsp. michiganensis (strain NCPPB 382)</name>
    <dbReference type="NCBI Taxonomy" id="443906"/>
    <lineage>
        <taxon>Bacteria</taxon>
        <taxon>Bacillati</taxon>
        <taxon>Actinomycetota</taxon>
        <taxon>Actinomycetes</taxon>
        <taxon>Micrococcales</taxon>
        <taxon>Microbacteriaceae</taxon>
        <taxon>Clavibacter</taxon>
    </lineage>
</organism>
<evidence type="ECO:0000255" key="1">
    <source>
        <dbReference type="HAMAP-Rule" id="MF_01302"/>
    </source>
</evidence>
<evidence type="ECO:0000305" key="2"/>
<gene>
    <name evidence="1" type="primary">rpsH</name>
    <name type="ordered locus">CMM_2604</name>
</gene>
<protein>
    <recommendedName>
        <fullName evidence="1">Small ribosomal subunit protein uS8</fullName>
    </recommendedName>
    <alternativeName>
        <fullName evidence="2">30S ribosomal protein S8</fullName>
    </alternativeName>
</protein>
<reference key="1">
    <citation type="journal article" date="2008" name="J. Bacteriol.">
        <title>The genome sequence of the tomato-pathogenic actinomycete Clavibacter michiganensis subsp. michiganensis NCPPB382 reveals a large island involved in pathogenicity.</title>
        <authorList>
            <person name="Gartemann K.-H."/>
            <person name="Abt B."/>
            <person name="Bekel T."/>
            <person name="Burger A."/>
            <person name="Engemann J."/>
            <person name="Fluegel M."/>
            <person name="Gaigalat L."/>
            <person name="Goesmann A."/>
            <person name="Graefen I."/>
            <person name="Kalinowski J."/>
            <person name="Kaup O."/>
            <person name="Kirchner O."/>
            <person name="Krause L."/>
            <person name="Linke B."/>
            <person name="McHardy A."/>
            <person name="Meyer F."/>
            <person name="Pohle S."/>
            <person name="Rueckert C."/>
            <person name="Schneiker S."/>
            <person name="Zellermann E.-M."/>
            <person name="Puehler A."/>
            <person name="Eichenlaub R."/>
            <person name="Kaiser O."/>
            <person name="Bartels D."/>
        </authorList>
    </citation>
    <scope>NUCLEOTIDE SEQUENCE [LARGE SCALE GENOMIC DNA]</scope>
    <source>
        <strain>NCPPB 382</strain>
    </source>
</reference>